<protein>
    <recommendedName>
        <fullName evidence="1">Elongation factor P--(R)-beta-lysine ligase</fullName>
        <shortName evidence="1">EF-P--(R)-beta-lysine ligase</shortName>
        <ecNumber evidence="1">6.3.2.-</ecNumber>
    </recommendedName>
    <alternativeName>
        <fullName evidence="1">EF-P post-translational modification enzyme A</fullName>
    </alternativeName>
    <alternativeName>
        <fullName evidence="1">EF-P-lysine lysyltransferase</fullName>
    </alternativeName>
</protein>
<proteinExistence type="inferred from homology"/>
<comment type="function">
    <text evidence="1">With EpmB is involved in the beta-lysylation step of the post-translational modification of translation elongation factor P (EF-P). Catalyzes the ATP-dependent activation of (R)-beta-lysine produced by EpmB, forming a lysyl-adenylate, from which the beta-lysyl moiety is then transferred to the epsilon-amino group of a conserved specific lysine residue in EF-P.</text>
</comment>
<comment type="catalytic activity">
    <reaction evidence="1">
        <text>D-beta-lysine + L-lysyl-[protein] + ATP = N(6)-((3R)-3,6-diaminohexanoyl)-L-lysyl-[protein] + AMP + diphosphate + H(+)</text>
        <dbReference type="Rhea" id="RHEA:83435"/>
        <dbReference type="Rhea" id="RHEA-COMP:9752"/>
        <dbReference type="Rhea" id="RHEA-COMP:20131"/>
        <dbReference type="ChEBI" id="CHEBI:15378"/>
        <dbReference type="ChEBI" id="CHEBI:29969"/>
        <dbReference type="ChEBI" id="CHEBI:30616"/>
        <dbReference type="ChEBI" id="CHEBI:33019"/>
        <dbReference type="ChEBI" id="CHEBI:84138"/>
        <dbReference type="ChEBI" id="CHEBI:156053"/>
        <dbReference type="ChEBI" id="CHEBI:456215"/>
    </reaction>
    <physiologicalReaction direction="left-to-right" evidence="1">
        <dbReference type="Rhea" id="RHEA:83436"/>
    </physiologicalReaction>
</comment>
<comment type="subunit">
    <text evidence="1">Homodimer.</text>
</comment>
<comment type="similarity">
    <text evidence="1">Belongs to the class-II aminoacyl-tRNA synthetase family. EpmA subfamily.</text>
</comment>
<dbReference type="EC" id="6.3.2.-" evidence="1"/>
<dbReference type="EMBL" id="CP000672">
    <property type="protein sequence ID" value="ABR00391.1"/>
    <property type="molecule type" value="Genomic_DNA"/>
</dbReference>
<dbReference type="SMR" id="A5UHY5"/>
<dbReference type="KEGG" id="hiq:CGSHiGG_07690"/>
<dbReference type="HOGENOM" id="CLU_008255_1_1_6"/>
<dbReference type="Proteomes" id="UP000001990">
    <property type="component" value="Chromosome"/>
</dbReference>
<dbReference type="GO" id="GO:0005829">
    <property type="term" value="C:cytosol"/>
    <property type="evidence" value="ECO:0007669"/>
    <property type="project" value="TreeGrafter"/>
</dbReference>
<dbReference type="GO" id="GO:0016880">
    <property type="term" value="F:acid-ammonia (or amide) ligase activity"/>
    <property type="evidence" value="ECO:0007669"/>
    <property type="project" value="UniProtKB-UniRule"/>
</dbReference>
<dbReference type="GO" id="GO:0005524">
    <property type="term" value="F:ATP binding"/>
    <property type="evidence" value="ECO:0007669"/>
    <property type="project" value="UniProtKB-UniRule"/>
</dbReference>
<dbReference type="GO" id="GO:0004824">
    <property type="term" value="F:lysine-tRNA ligase activity"/>
    <property type="evidence" value="ECO:0007669"/>
    <property type="project" value="InterPro"/>
</dbReference>
<dbReference type="GO" id="GO:0000049">
    <property type="term" value="F:tRNA binding"/>
    <property type="evidence" value="ECO:0007669"/>
    <property type="project" value="TreeGrafter"/>
</dbReference>
<dbReference type="GO" id="GO:0006430">
    <property type="term" value="P:lysyl-tRNA aminoacylation"/>
    <property type="evidence" value="ECO:0007669"/>
    <property type="project" value="InterPro"/>
</dbReference>
<dbReference type="FunFam" id="3.30.930.10:FF:000017">
    <property type="entry name" value="Elongation factor P--(R)-beta-lysine ligase"/>
    <property type="match status" value="1"/>
</dbReference>
<dbReference type="Gene3D" id="3.30.930.10">
    <property type="entry name" value="Bira Bifunctional Protein, Domain 2"/>
    <property type="match status" value="1"/>
</dbReference>
<dbReference type="HAMAP" id="MF_00174">
    <property type="entry name" value="EF_P_modif_A"/>
    <property type="match status" value="1"/>
</dbReference>
<dbReference type="InterPro" id="IPR004364">
    <property type="entry name" value="Aa-tRNA-synt_II"/>
</dbReference>
<dbReference type="InterPro" id="IPR006195">
    <property type="entry name" value="aa-tRNA-synth_II"/>
</dbReference>
<dbReference type="InterPro" id="IPR045864">
    <property type="entry name" value="aa-tRNA-synth_II/BPL/LPL"/>
</dbReference>
<dbReference type="InterPro" id="IPR004525">
    <property type="entry name" value="EpmA"/>
</dbReference>
<dbReference type="InterPro" id="IPR018149">
    <property type="entry name" value="Lys-tRNA-synth_II_C"/>
</dbReference>
<dbReference type="NCBIfam" id="TIGR00462">
    <property type="entry name" value="genX"/>
    <property type="match status" value="1"/>
</dbReference>
<dbReference type="NCBIfam" id="NF006828">
    <property type="entry name" value="PRK09350.1"/>
    <property type="match status" value="1"/>
</dbReference>
<dbReference type="PANTHER" id="PTHR42918:SF6">
    <property type="entry name" value="ELONGATION FACTOR P--(R)-BETA-LYSINE LIGASE"/>
    <property type="match status" value="1"/>
</dbReference>
<dbReference type="PANTHER" id="PTHR42918">
    <property type="entry name" value="LYSYL-TRNA SYNTHETASE"/>
    <property type="match status" value="1"/>
</dbReference>
<dbReference type="Pfam" id="PF00152">
    <property type="entry name" value="tRNA-synt_2"/>
    <property type="match status" value="1"/>
</dbReference>
<dbReference type="PRINTS" id="PR00982">
    <property type="entry name" value="TRNASYNTHLYS"/>
</dbReference>
<dbReference type="SUPFAM" id="SSF55681">
    <property type="entry name" value="Class II aaRS and biotin synthetases"/>
    <property type="match status" value="1"/>
</dbReference>
<dbReference type="PROSITE" id="PS50862">
    <property type="entry name" value="AA_TRNA_LIGASE_II"/>
    <property type="match status" value="1"/>
</dbReference>
<name>EPMA_HAEIG</name>
<feature type="chain" id="PRO_1000023624" description="Elongation factor P--(R)-beta-lysine ligase">
    <location>
        <begin position="1"/>
        <end position="323"/>
    </location>
</feature>
<feature type="binding site" evidence="1">
    <location>
        <begin position="76"/>
        <end position="78"/>
    </location>
    <ligand>
        <name>substrate</name>
    </ligand>
</feature>
<feature type="binding site" evidence="1">
    <location>
        <begin position="100"/>
        <end position="102"/>
    </location>
    <ligand>
        <name>ATP</name>
        <dbReference type="ChEBI" id="CHEBI:30616"/>
    </ligand>
</feature>
<feature type="binding site" evidence="1">
    <location>
        <position position="109"/>
    </location>
    <ligand>
        <name>ATP</name>
        <dbReference type="ChEBI" id="CHEBI:30616"/>
    </ligand>
</feature>
<feature type="binding site" evidence="1">
    <location>
        <position position="118"/>
    </location>
    <ligand>
        <name>substrate</name>
    </ligand>
</feature>
<feature type="binding site" evidence="1">
    <location>
        <begin position="242"/>
        <end position="243"/>
    </location>
    <ligand>
        <name>ATP</name>
        <dbReference type="ChEBI" id="CHEBI:30616"/>
    </ligand>
</feature>
<feature type="binding site" evidence="1">
    <location>
        <position position="249"/>
    </location>
    <ligand>
        <name>substrate</name>
    </ligand>
</feature>
<feature type="binding site" evidence="1">
    <location>
        <position position="298"/>
    </location>
    <ligand>
        <name>ATP</name>
        <dbReference type="ChEBI" id="CHEBI:30616"/>
    </ligand>
</feature>
<keyword id="KW-0067">ATP-binding</keyword>
<keyword id="KW-0436">Ligase</keyword>
<keyword id="KW-0547">Nucleotide-binding</keyword>
<organism>
    <name type="scientific">Haemophilus influenzae (strain PittGG)</name>
    <dbReference type="NCBI Taxonomy" id="374931"/>
    <lineage>
        <taxon>Bacteria</taxon>
        <taxon>Pseudomonadati</taxon>
        <taxon>Pseudomonadota</taxon>
        <taxon>Gammaproteobacteria</taxon>
        <taxon>Pasteurellales</taxon>
        <taxon>Pasteurellaceae</taxon>
        <taxon>Haemophilus</taxon>
    </lineage>
</organism>
<sequence length="323" mass="37133">MTALNHWQPSADIKNLLKRAKIIAEIRQFFTERGLLEVETPVLSEFGVTDLHLSTFSTEFLAPFGEQSKTLWLSTSPEYHMKRLLAAGSGPIFQISKVFRNEEAGNRHNPEFTMLEWYRPHFHMHRLINEVDDLLQQILDCPPAESLSYQFVFQEYVGLDPLSAERSELIEAARKHNFMAEDNEDRDTLLQFLFSEVVEPQIGKERPIAVYHFPSTQAALAQVSPEDQRVAERFEFYYKGLELANGFHELADAQEQRHRFELDNQQRQKCELPTREIDERFLAALEAGMPDASGVALGIDRLMMIALDCEKINDVISFAVDNA</sequence>
<reference key="1">
    <citation type="journal article" date="2007" name="Genome Biol.">
        <title>Characterization and modeling of the Haemophilus influenzae core and supragenomes based on the complete genomic sequences of Rd and 12 clinical nontypeable strains.</title>
        <authorList>
            <person name="Hogg J.S."/>
            <person name="Hu F.Z."/>
            <person name="Janto B."/>
            <person name="Boissy R."/>
            <person name="Hayes J."/>
            <person name="Keefe R."/>
            <person name="Post J.C."/>
            <person name="Ehrlich G.D."/>
        </authorList>
    </citation>
    <scope>NUCLEOTIDE SEQUENCE [LARGE SCALE GENOMIC DNA]</scope>
    <source>
        <strain>PittGG</strain>
    </source>
</reference>
<accession>A5UHY5</accession>
<gene>
    <name evidence="1" type="primary">epmA</name>
    <name type="synonym">yjeA</name>
    <name type="ordered locus">CGSHiGG_07690</name>
</gene>
<evidence type="ECO:0000255" key="1">
    <source>
        <dbReference type="HAMAP-Rule" id="MF_00174"/>
    </source>
</evidence>